<protein>
    <recommendedName>
        <fullName evidence="1">Ferrochelatase</fullName>
        <ecNumber evidence="1">4.98.1.1</ecNumber>
    </recommendedName>
    <alternativeName>
        <fullName evidence="1">Heme synthase</fullName>
    </alternativeName>
    <alternativeName>
        <fullName evidence="1">Protoheme ferro-lyase</fullName>
    </alternativeName>
</protein>
<dbReference type="EC" id="4.98.1.1" evidence="1"/>
<dbReference type="EMBL" id="CP001661">
    <property type="protein sequence ID" value="ACT16125.1"/>
    <property type="molecule type" value="Genomic_DNA"/>
</dbReference>
<dbReference type="SMR" id="C6E7U2"/>
<dbReference type="STRING" id="443144.GM21_0038"/>
<dbReference type="KEGG" id="gem:GM21_0038"/>
<dbReference type="eggNOG" id="COG0276">
    <property type="taxonomic scope" value="Bacteria"/>
</dbReference>
<dbReference type="HOGENOM" id="CLU_018884_4_1_7"/>
<dbReference type="OrthoDB" id="9809741at2"/>
<dbReference type="UniPathway" id="UPA00252">
    <property type="reaction ID" value="UER00325"/>
</dbReference>
<dbReference type="GO" id="GO:0005737">
    <property type="term" value="C:cytoplasm"/>
    <property type="evidence" value="ECO:0007669"/>
    <property type="project" value="UniProtKB-SubCell"/>
</dbReference>
<dbReference type="GO" id="GO:0004325">
    <property type="term" value="F:ferrochelatase activity"/>
    <property type="evidence" value="ECO:0007669"/>
    <property type="project" value="UniProtKB-UniRule"/>
</dbReference>
<dbReference type="GO" id="GO:0046872">
    <property type="term" value="F:metal ion binding"/>
    <property type="evidence" value="ECO:0007669"/>
    <property type="project" value="UniProtKB-KW"/>
</dbReference>
<dbReference type="GO" id="GO:0006783">
    <property type="term" value="P:heme biosynthetic process"/>
    <property type="evidence" value="ECO:0007669"/>
    <property type="project" value="UniProtKB-UniRule"/>
</dbReference>
<dbReference type="CDD" id="cd00419">
    <property type="entry name" value="Ferrochelatase_C"/>
    <property type="match status" value="1"/>
</dbReference>
<dbReference type="CDD" id="cd03411">
    <property type="entry name" value="Ferrochelatase_N"/>
    <property type="match status" value="1"/>
</dbReference>
<dbReference type="Gene3D" id="3.40.50.1400">
    <property type="match status" value="2"/>
</dbReference>
<dbReference type="HAMAP" id="MF_00323">
    <property type="entry name" value="Ferrochelatase"/>
    <property type="match status" value="1"/>
</dbReference>
<dbReference type="InterPro" id="IPR001015">
    <property type="entry name" value="Ferrochelatase"/>
</dbReference>
<dbReference type="InterPro" id="IPR019772">
    <property type="entry name" value="Ferrochelatase_AS"/>
</dbReference>
<dbReference type="InterPro" id="IPR033644">
    <property type="entry name" value="Ferrochelatase_C"/>
</dbReference>
<dbReference type="InterPro" id="IPR033659">
    <property type="entry name" value="Ferrochelatase_N"/>
</dbReference>
<dbReference type="NCBIfam" id="TIGR00109">
    <property type="entry name" value="hemH"/>
    <property type="match status" value="1"/>
</dbReference>
<dbReference type="PANTHER" id="PTHR11108">
    <property type="entry name" value="FERROCHELATASE"/>
    <property type="match status" value="1"/>
</dbReference>
<dbReference type="PANTHER" id="PTHR11108:SF1">
    <property type="entry name" value="FERROCHELATASE, MITOCHONDRIAL"/>
    <property type="match status" value="1"/>
</dbReference>
<dbReference type="Pfam" id="PF00762">
    <property type="entry name" value="Ferrochelatase"/>
    <property type="match status" value="1"/>
</dbReference>
<dbReference type="SUPFAM" id="SSF53800">
    <property type="entry name" value="Chelatase"/>
    <property type="match status" value="1"/>
</dbReference>
<dbReference type="PROSITE" id="PS00534">
    <property type="entry name" value="FERROCHELATASE"/>
    <property type="match status" value="1"/>
</dbReference>
<name>HEMH_GEOSM</name>
<organism>
    <name type="scientific">Geobacter sp. (strain M21)</name>
    <dbReference type="NCBI Taxonomy" id="443144"/>
    <lineage>
        <taxon>Bacteria</taxon>
        <taxon>Pseudomonadati</taxon>
        <taxon>Thermodesulfobacteriota</taxon>
        <taxon>Desulfuromonadia</taxon>
        <taxon>Geobacterales</taxon>
        <taxon>Geobacteraceae</taxon>
        <taxon>Geobacter</taxon>
    </lineage>
</organism>
<proteinExistence type="inferred from homology"/>
<keyword id="KW-0963">Cytoplasm</keyword>
<keyword id="KW-0350">Heme biosynthesis</keyword>
<keyword id="KW-0408">Iron</keyword>
<keyword id="KW-0456">Lyase</keyword>
<keyword id="KW-0479">Metal-binding</keyword>
<keyword id="KW-0627">Porphyrin biosynthesis</keyword>
<sequence length="317" mass="35530">MSSKTALLLLQMGGPDSLDAVHPFLMKLFTDRDIIKIGPAFLQPFIARRIVNKRAPKVEEYYRQIGGKSPIRELTEAQGEGLQQLLGEDFRSFVAMRYSRPSTIDALAAIKRAGIERVIALSLYPHYSRATTGSSVNELKRVLNESGAKFEISYIDRFYNHPLYIKALSEKVVQGLAAFPDSKDVEIVFSAHSLPQSFIEEGDPYLDHIQETVRLVMEQVGEGSHTLCFQSKASRVKWLEPSTEATIEQMAKAGKKNLLMVPLSFVSDHIETLYEIDIQYGEEAKALGIERFIRTESLNSSPLFLECLADLVKTAAK</sequence>
<gene>
    <name evidence="1" type="primary">hemH</name>
    <name type="ordered locus">GM21_0038</name>
</gene>
<accession>C6E7U2</accession>
<reference key="1">
    <citation type="submission" date="2009-07" db="EMBL/GenBank/DDBJ databases">
        <title>Complete sequence of Geobacter sp. M21.</title>
        <authorList>
            <consortium name="US DOE Joint Genome Institute"/>
            <person name="Lucas S."/>
            <person name="Copeland A."/>
            <person name="Lapidus A."/>
            <person name="Glavina del Rio T."/>
            <person name="Dalin E."/>
            <person name="Tice H."/>
            <person name="Bruce D."/>
            <person name="Goodwin L."/>
            <person name="Pitluck S."/>
            <person name="Saunders E."/>
            <person name="Brettin T."/>
            <person name="Detter J.C."/>
            <person name="Han C."/>
            <person name="Larimer F."/>
            <person name="Land M."/>
            <person name="Hauser L."/>
            <person name="Kyrpides N."/>
            <person name="Ovchinnikova G."/>
            <person name="Lovley D."/>
        </authorList>
    </citation>
    <scope>NUCLEOTIDE SEQUENCE [LARGE SCALE GENOMIC DNA]</scope>
    <source>
        <strain>M21</strain>
    </source>
</reference>
<feature type="chain" id="PRO_1000205153" description="Ferrochelatase">
    <location>
        <begin position="1"/>
        <end position="317"/>
    </location>
</feature>
<feature type="binding site" evidence="1">
    <location>
        <position position="192"/>
    </location>
    <ligand>
        <name>Fe cation</name>
        <dbReference type="ChEBI" id="CHEBI:24875"/>
    </ligand>
</feature>
<feature type="binding site" evidence="1">
    <location>
        <position position="271"/>
    </location>
    <ligand>
        <name>Fe cation</name>
        <dbReference type="ChEBI" id="CHEBI:24875"/>
    </ligand>
</feature>
<evidence type="ECO:0000255" key="1">
    <source>
        <dbReference type="HAMAP-Rule" id="MF_00323"/>
    </source>
</evidence>
<comment type="function">
    <text evidence="1">Catalyzes the ferrous insertion into protoporphyrin IX.</text>
</comment>
<comment type="catalytic activity">
    <reaction evidence="1">
        <text>heme b + 2 H(+) = protoporphyrin IX + Fe(2+)</text>
        <dbReference type="Rhea" id="RHEA:22584"/>
        <dbReference type="ChEBI" id="CHEBI:15378"/>
        <dbReference type="ChEBI" id="CHEBI:29033"/>
        <dbReference type="ChEBI" id="CHEBI:57306"/>
        <dbReference type="ChEBI" id="CHEBI:60344"/>
        <dbReference type="EC" id="4.98.1.1"/>
    </reaction>
</comment>
<comment type="pathway">
    <text evidence="1">Porphyrin-containing compound metabolism; protoheme biosynthesis; protoheme from protoporphyrin-IX: step 1/1.</text>
</comment>
<comment type="subcellular location">
    <subcellularLocation>
        <location evidence="1">Cytoplasm</location>
    </subcellularLocation>
</comment>
<comment type="similarity">
    <text evidence="1">Belongs to the ferrochelatase family.</text>
</comment>